<proteinExistence type="inferred from homology"/>
<sequence length="99" mass="10721">MSSFFGSGAGSPSNDMTARKEQMKQSIQQELAIANAQQLINKINENCFAKCVTKPSTSLSSSQESCLSQCMTLYMAAFDQVSRSYVARISKERGVAPGL</sequence>
<feature type="chain" id="PRO_0000410312" description="Mitochondrial import inner membrane translocase subunit TIM13">
    <location>
        <begin position="1"/>
        <end position="99"/>
    </location>
</feature>
<feature type="region of interest" description="Disordered" evidence="2">
    <location>
        <begin position="1"/>
        <end position="24"/>
    </location>
</feature>
<feature type="short sequence motif" description="Twin CX3C motif">
    <location>
        <begin position="47"/>
        <end position="70"/>
    </location>
</feature>
<feature type="compositionally biased region" description="Low complexity" evidence="2">
    <location>
        <begin position="1"/>
        <end position="13"/>
    </location>
</feature>
<feature type="disulfide bond" evidence="1">
    <location>
        <begin position="47"/>
        <end position="70"/>
    </location>
</feature>
<feature type="disulfide bond" evidence="1">
    <location>
        <begin position="51"/>
        <end position="66"/>
    </location>
</feature>
<gene>
    <name type="primary">TIM13</name>
    <name type="ordered locus">CNBG2010</name>
</gene>
<dbReference type="EMBL" id="AAEY01000038">
    <property type="protein sequence ID" value="EAL19572.1"/>
    <property type="status" value="ALT_SEQ"/>
    <property type="molecule type" value="Genomic_DNA"/>
</dbReference>
<dbReference type="RefSeq" id="XP_774219.1">
    <property type="nucleotide sequence ID" value="XM_769126.1"/>
</dbReference>
<dbReference type="SMR" id="P0CS01"/>
<dbReference type="EnsemblFungi" id="AAW44632">
    <property type="protein sequence ID" value="AAW44632"/>
    <property type="gene ID" value="CNG02760"/>
</dbReference>
<dbReference type="GeneID" id="4937235"/>
<dbReference type="KEGG" id="cnb:CNBG2010"/>
<dbReference type="HOGENOM" id="CLU_141397_0_1_1"/>
<dbReference type="OrthoDB" id="1483at5206"/>
<dbReference type="GO" id="GO:0005743">
    <property type="term" value="C:mitochondrial inner membrane"/>
    <property type="evidence" value="ECO:0007669"/>
    <property type="project" value="UniProtKB-SubCell"/>
</dbReference>
<dbReference type="GO" id="GO:0042719">
    <property type="term" value="C:mitochondrial intermembrane space protein transporter complex"/>
    <property type="evidence" value="ECO:0007669"/>
    <property type="project" value="EnsemblFungi"/>
</dbReference>
<dbReference type="GO" id="GO:0046872">
    <property type="term" value="F:metal ion binding"/>
    <property type="evidence" value="ECO:0007669"/>
    <property type="project" value="UniProtKB-KW"/>
</dbReference>
<dbReference type="GO" id="GO:0140318">
    <property type="term" value="F:protein transporter activity"/>
    <property type="evidence" value="ECO:0007669"/>
    <property type="project" value="EnsemblFungi"/>
</dbReference>
<dbReference type="GO" id="GO:0045039">
    <property type="term" value="P:protein insertion into mitochondrial inner membrane"/>
    <property type="evidence" value="ECO:0007669"/>
    <property type="project" value="EnsemblFungi"/>
</dbReference>
<dbReference type="FunFam" id="1.10.287.810:FF:000001">
    <property type="entry name" value="mitochondrial import inner membrane translocase subunit TIM13"/>
    <property type="match status" value="1"/>
</dbReference>
<dbReference type="Gene3D" id="1.10.287.810">
    <property type="entry name" value="Mitochondrial import inner membrane translocase subunit tim13 like domains"/>
    <property type="match status" value="1"/>
</dbReference>
<dbReference type="InterPro" id="IPR004217">
    <property type="entry name" value="Tim10-like"/>
</dbReference>
<dbReference type="InterPro" id="IPR035427">
    <property type="entry name" value="Tim10-like_dom_sf"/>
</dbReference>
<dbReference type="Pfam" id="PF02953">
    <property type="entry name" value="zf-Tim10_DDP"/>
    <property type="match status" value="1"/>
</dbReference>
<dbReference type="SUPFAM" id="SSF144122">
    <property type="entry name" value="Tim10-like"/>
    <property type="match status" value="1"/>
</dbReference>
<protein>
    <recommendedName>
        <fullName>Mitochondrial import inner membrane translocase subunit TIM13</fullName>
    </recommendedName>
</protein>
<reference key="1">
    <citation type="journal article" date="2005" name="Science">
        <title>The genome of the basidiomycetous yeast and human pathogen Cryptococcus neoformans.</title>
        <authorList>
            <person name="Loftus B.J."/>
            <person name="Fung E."/>
            <person name="Roncaglia P."/>
            <person name="Rowley D."/>
            <person name="Amedeo P."/>
            <person name="Bruno D."/>
            <person name="Vamathevan J."/>
            <person name="Miranda M."/>
            <person name="Anderson I.J."/>
            <person name="Fraser J.A."/>
            <person name="Allen J.E."/>
            <person name="Bosdet I.E."/>
            <person name="Brent M.R."/>
            <person name="Chiu R."/>
            <person name="Doering T.L."/>
            <person name="Donlin M.J."/>
            <person name="D'Souza C.A."/>
            <person name="Fox D.S."/>
            <person name="Grinberg V."/>
            <person name="Fu J."/>
            <person name="Fukushima M."/>
            <person name="Haas B.J."/>
            <person name="Huang J.C."/>
            <person name="Janbon G."/>
            <person name="Jones S.J.M."/>
            <person name="Koo H.L."/>
            <person name="Krzywinski M.I."/>
            <person name="Kwon-Chung K.J."/>
            <person name="Lengeler K.B."/>
            <person name="Maiti R."/>
            <person name="Marra M.A."/>
            <person name="Marra R.E."/>
            <person name="Mathewson C.A."/>
            <person name="Mitchell T.G."/>
            <person name="Pertea M."/>
            <person name="Riggs F.R."/>
            <person name="Salzberg S.L."/>
            <person name="Schein J.E."/>
            <person name="Shvartsbeyn A."/>
            <person name="Shin H."/>
            <person name="Shumway M."/>
            <person name="Specht C.A."/>
            <person name="Suh B.B."/>
            <person name="Tenney A."/>
            <person name="Utterback T.R."/>
            <person name="Wickes B.L."/>
            <person name="Wortman J.R."/>
            <person name="Wye N.H."/>
            <person name="Kronstad J.W."/>
            <person name="Lodge J.K."/>
            <person name="Heitman J."/>
            <person name="Davis R.W."/>
            <person name="Fraser C.M."/>
            <person name="Hyman R.W."/>
        </authorList>
    </citation>
    <scope>NUCLEOTIDE SEQUENCE [LARGE SCALE GENOMIC DNA]</scope>
    <source>
        <strain>B-3501A</strain>
    </source>
</reference>
<organism>
    <name type="scientific">Cryptococcus neoformans var. neoformans serotype D (strain B-3501A)</name>
    <name type="common">Filobasidiella neoformans</name>
    <dbReference type="NCBI Taxonomy" id="283643"/>
    <lineage>
        <taxon>Eukaryota</taxon>
        <taxon>Fungi</taxon>
        <taxon>Dikarya</taxon>
        <taxon>Basidiomycota</taxon>
        <taxon>Agaricomycotina</taxon>
        <taxon>Tremellomycetes</taxon>
        <taxon>Tremellales</taxon>
        <taxon>Cryptococcaceae</taxon>
        <taxon>Cryptococcus</taxon>
        <taxon>Cryptococcus neoformans species complex</taxon>
    </lineage>
</organism>
<comment type="function">
    <text evidence="1">Mitochondrial intermembrane chaperone that participates in the import and insertion of some multi-pass transmembrane proteins into the mitochondrial inner membrane. Also required for the transfer of beta-barrel precursors from the TOM complex to the sorting and assembly machinery (SAM complex) of the outer membrane. Acts as a chaperone-like protein that protects the hydrophobic precursors from aggregation and guide them through the mitochondrial intermembrane space. The TIM8-TIM13 complex is non essential and only mediates the import of few proteins, while the predominant TIM9-TIM10 70 kDa complex is crucial and mediates the import of much more proteins (By similarity).</text>
</comment>
<comment type="subunit">
    <text evidence="1">Heterohexamer; composed of 3 copies of TIM8 and 3 copies of TIM13, named soluble 70 kDa complex. Associates with the TIM22 complex, whose core is composed of TIM22 and TIM54. Interacts with the transmembrane regions of multi-pass transmembrane proteins in transit (By similarity).</text>
</comment>
<comment type="subcellular location">
    <subcellularLocation>
        <location evidence="1">Mitochondrion inner membrane</location>
        <topology evidence="1">Peripheral membrane protein</topology>
        <orientation evidence="1">Intermembrane side</orientation>
    </subcellularLocation>
</comment>
<comment type="domain">
    <text evidence="1">The twin CX3C motif contains 4 conserved Cys residues that form 2 disulfide bonds in the mitochondrial intermembrane space. However, during the transit of TIM13 from cytoplasm into mitochondrion, the Cys residues probably coordinate zinc, thereby preventing folding and allowing its transfer across mitochondrial outer membrane (By similarity).</text>
</comment>
<comment type="similarity">
    <text evidence="3">Belongs to the small Tim family.</text>
</comment>
<comment type="sequence caution" evidence="3">
    <conflict type="erroneous gene model prediction">
        <sequence resource="EMBL-CDS" id="EAL19572"/>
    </conflict>
</comment>
<keyword id="KW-0143">Chaperone</keyword>
<keyword id="KW-1015">Disulfide bond</keyword>
<keyword id="KW-0472">Membrane</keyword>
<keyword id="KW-0479">Metal-binding</keyword>
<keyword id="KW-0496">Mitochondrion</keyword>
<keyword id="KW-0999">Mitochondrion inner membrane</keyword>
<keyword id="KW-0653">Protein transport</keyword>
<keyword id="KW-0811">Translocation</keyword>
<keyword id="KW-0813">Transport</keyword>
<keyword id="KW-0862">Zinc</keyword>
<name>TIM13_CRYNB</name>
<evidence type="ECO:0000250" key="1"/>
<evidence type="ECO:0000256" key="2">
    <source>
        <dbReference type="SAM" id="MobiDB-lite"/>
    </source>
</evidence>
<evidence type="ECO:0000305" key="3"/>
<accession>P0CS01</accession>
<accession>Q55PL2</accession>
<accession>Q5KDU4</accession>